<reference key="1">
    <citation type="submission" date="2001-02" db="EMBL/GenBank/DDBJ databases">
        <title>Molecular cloning and acceptor specificity of the murine UDP-GalNAc: polypeptide N-acetylgalactosaminyltransferase, pp-GalNAc-T7.</title>
        <authorList>
            <person name="Kanoh A."/>
            <person name="Miyahara N."/>
            <person name="Irimura T."/>
        </authorList>
    </citation>
    <scope>NUCLEOTIDE SEQUENCE [MRNA] (ISOFORM 1)</scope>
    <source>
        <tissue>Colon adenocarcinoma</tissue>
    </source>
</reference>
<reference key="2">
    <citation type="journal article" date="2005" name="Science">
        <title>The transcriptional landscape of the mammalian genome.</title>
        <authorList>
            <person name="Carninci P."/>
            <person name="Kasukawa T."/>
            <person name="Katayama S."/>
            <person name="Gough J."/>
            <person name="Frith M.C."/>
            <person name="Maeda N."/>
            <person name="Oyama R."/>
            <person name="Ravasi T."/>
            <person name="Lenhard B."/>
            <person name="Wells C."/>
            <person name="Kodzius R."/>
            <person name="Shimokawa K."/>
            <person name="Bajic V.B."/>
            <person name="Brenner S.E."/>
            <person name="Batalov S."/>
            <person name="Forrest A.R."/>
            <person name="Zavolan M."/>
            <person name="Davis M.J."/>
            <person name="Wilming L.G."/>
            <person name="Aidinis V."/>
            <person name="Allen J.E."/>
            <person name="Ambesi-Impiombato A."/>
            <person name="Apweiler R."/>
            <person name="Aturaliya R.N."/>
            <person name="Bailey T.L."/>
            <person name="Bansal M."/>
            <person name="Baxter L."/>
            <person name="Beisel K.W."/>
            <person name="Bersano T."/>
            <person name="Bono H."/>
            <person name="Chalk A.M."/>
            <person name="Chiu K.P."/>
            <person name="Choudhary V."/>
            <person name="Christoffels A."/>
            <person name="Clutterbuck D.R."/>
            <person name="Crowe M.L."/>
            <person name="Dalla E."/>
            <person name="Dalrymple B.P."/>
            <person name="de Bono B."/>
            <person name="Della Gatta G."/>
            <person name="di Bernardo D."/>
            <person name="Down T."/>
            <person name="Engstrom P."/>
            <person name="Fagiolini M."/>
            <person name="Faulkner G."/>
            <person name="Fletcher C.F."/>
            <person name="Fukushima T."/>
            <person name="Furuno M."/>
            <person name="Futaki S."/>
            <person name="Gariboldi M."/>
            <person name="Georgii-Hemming P."/>
            <person name="Gingeras T.R."/>
            <person name="Gojobori T."/>
            <person name="Green R.E."/>
            <person name="Gustincich S."/>
            <person name="Harbers M."/>
            <person name="Hayashi Y."/>
            <person name="Hensch T.K."/>
            <person name="Hirokawa N."/>
            <person name="Hill D."/>
            <person name="Huminiecki L."/>
            <person name="Iacono M."/>
            <person name="Ikeo K."/>
            <person name="Iwama A."/>
            <person name="Ishikawa T."/>
            <person name="Jakt M."/>
            <person name="Kanapin A."/>
            <person name="Katoh M."/>
            <person name="Kawasawa Y."/>
            <person name="Kelso J."/>
            <person name="Kitamura H."/>
            <person name="Kitano H."/>
            <person name="Kollias G."/>
            <person name="Krishnan S.P."/>
            <person name="Kruger A."/>
            <person name="Kummerfeld S.K."/>
            <person name="Kurochkin I.V."/>
            <person name="Lareau L.F."/>
            <person name="Lazarevic D."/>
            <person name="Lipovich L."/>
            <person name="Liu J."/>
            <person name="Liuni S."/>
            <person name="McWilliam S."/>
            <person name="Madan Babu M."/>
            <person name="Madera M."/>
            <person name="Marchionni L."/>
            <person name="Matsuda H."/>
            <person name="Matsuzawa S."/>
            <person name="Miki H."/>
            <person name="Mignone F."/>
            <person name="Miyake S."/>
            <person name="Morris K."/>
            <person name="Mottagui-Tabar S."/>
            <person name="Mulder N."/>
            <person name="Nakano N."/>
            <person name="Nakauchi H."/>
            <person name="Ng P."/>
            <person name="Nilsson R."/>
            <person name="Nishiguchi S."/>
            <person name="Nishikawa S."/>
            <person name="Nori F."/>
            <person name="Ohara O."/>
            <person name="Okazaki Y."/>
            <person name="Orlando V."/>
            <person name="Pang K.C."/>
            <person name="Pavan W.J."/>
            <person name="Pavesi G."/>
            <person name="Pesole G."/>
            <person name="Petrovsky N."/>
            <person name="Piazza S."/>
            <person name="Reed J."/>
            <person name="Reid J.F."/>
            <person name="Ring B.Z."/>
            <person name="Ringwald M."/>
            <person name="Rost B."/>
            <person name="Ruan Y."/>
            <person name="Salzberg S.L."/>
            <person name="Sandelin A."/>
            <person name="Schneider C."/>
            <person name="Schoenbach C."/>
            <person name="Sekiguchi K."/>
            <person name="Semple C.A."/>
            <person name="Seno S."/>
            <person name="Sessa L."/>
            <person name="Sheng Y."/>
            <person name="Shibata Y."/>
            <person name="Shimada H."/>
            <person name="Shimada K."/>
            <person name="Silva D."/>
            <person name="Sinclair B."/>
            <person name="Sperling S."/>
            <person name="Stupka E."/>
            <person name="Sugiura K."/>
            <person name="Sultana R."/>
            <person name="Takenaka Y."/>
            <person name="Taki K."/>
            <person name="Tammoja K."/>
            <person name="Tan S.L."/>
            <person name="Tang S."/>
            <person name="Taylor M.S."/>
            <person name="Tegner J."/>
            <person name="Teichmann S.A."/>
            <person name="Ueda H.R."/>
            <person name="van Nimwegen E."/>
            <person name="Verardo R."/>
            <person name="Wei C.L."/>
            <person name="Yagi K."/>
            <person name="Yamanishi H."/>
            <person name="Zabarovsky E."/>
            <person name="Zhu S."/>
            <person name="Zimmer A."/>
            <person name="Hide W."/>
            <person name="Bult C."/>
            <person name="Grimmond S.M."/>
            <person name="Teasdale R.D."/>
            <person name="Liu E.T."/>
            <person name="Brusic V."/>
            <person name="Quackenbush J."/>
            <person name="Wahlestedt C."/>
            <person name="Mattick J.S."/>
            <person name="Hume D.A."/>
            <person name="Kai C."/>
            <person name="Sasaki D."/>
            <person name="Tomaru Y."/>
            <person name="Fukuda S."/>
            <person name="Kanamori-Katayama M."/>
            <person name="Suzuki M."/>
            <person name="Aoki J."/>
            <person name="Arakawa T."/>
            <person name="Iida J."/>
            <person name="Imamura K."/>
            <person name="Itoh M."/>
            <person name="Kato T."/>
            <person name="Kawaji H."/>
            <person name="Kawagashira N."/>
            <person name="Kawashima T."/>
            <person name="Kojima M."/>
            <person name="Kondo S."/>
            <person name="Konno H."/>
            <person name="Nakano K."/>
            <person name="Ninomiya N."/>
            <person name="Nishio T."/>
            <person name="Okada M."/>
            <person name="Plessy C."/>
            <person name="Shibata K."/>
            <person name="Shiraki T."/>
            <person name="Suzuki S."/>
            <person name="Tagami M."/>
            <person name="Waki K."/>
            <person name="Watahiki A."/>
            <person name="Okamura-Oho Y."/>
            <person name="Suzuki H."/>
            <person name="Kawai J."/>
            <person name="Hayashizaki Y."/>
        </authorList>
    </citation>
    <scope>NUCLEOTIDE SEQUENCE [LARGE SCALE MRNA] (ISOFORMS 2 AND 3)</scope>
    <source>
        <strain>C57BL/6J</strain>
        <tissue>Bone</tissue>
        <tissue>Colon</tissue>
        <tissue>Thymus</tissue>
    </source>
</reference>
<reference key="3">
    <citation type="journal article" date="2004" name="Genome Res.">
        <title>The status, quality, and expansion of the NIH full-length cDNA project: the Mammalian Gene Collection (MGC).</title>
        <authorList>
            <consortium name="The MGC Project Team"/>
        </authorList>
    </citation>
    <scope>NUCLEOTIDE SEQUENCE [LARGE SCALE MRNA] (ISOFORM 1)</scope>
    <source>
        <strain>C57BL/6J</strain>
        <strain>FVB/N</strain>
        <tissue>Brain</tissue>
        <tissue>Mammary tumor</tissue>
    </source>
</reference>
<reference key="4">
    <citation type="journal article" date="1999" name="J. Biol. Chem.">
        <title>Characterization of a UDP-GalNAc:polypeptide N-acetylgalactosaminyltransferase that displays glycopeptide N-acetylgalactosaminyltransferase activity.</title>
        <authorList>
            <person name="Ten Hagen K.G."/>
            <person name="Tetaert D."/>
            <person name="Hagen F.K."/>
            <person name="Richet C."/>
            <person name="Beres T.B."/>
            <person name="Gagnon J."/>
            <person name="Balys M.M."/>
            <person name="VanWuyckhuyse B."/>
            <person name="Bedi G.S."/>
            <person name="Degand P."/>
            <person name="Tabak L.A."/>
        </authorList>
    </citation>
    <scope>TISSUE SPECIFICITY</scope>
</reference>
<reference key="5">
    <citation type="journal article" date="2010" name="Cell">
        <title>A tissue-specific atlas of mouse protein phosphorylation and expression.</title>
        <authorList>
            <person name="Huttlin E.L."/>
            <person name="Jedrychowski M.P."/>
            <person name="Elias J.E."/>
            <person name="Goswami T."/>
            <person name="Rad R."/>
            <person name="Beausoleil S.A."/>
            <person name="Villen J."/>
            <person name="Haas W."/>
            <person name="Sowa M.E."/>
            <person name="Gygi S.P."/>
        </authorList>
    </citation>
    <scope>IDENTIFICATION BY MASS SPECTROMETRY [LARGE SCALE ANALYSIS]</scope>
    <source>
        <tissue>Pancreas</tissue>
    </source>
</reference>
<name>GALT7_MOUSE</name>
<feature type="chain" id="PRO_0000059117" description="N-acetylgalactosaminyltransferase 7">
    <location>
        <begin position="1"/>
        <end position="657"/>
    </location>
</feature>
<feature type="topological domain" description="Cytoplasmic" evidence="3">
    <location>
        <begin position="1"/>
        <end position="6"/>
    </location>
</feature>
<feature type="transmembrane region" description="Helical; Signal-anchor for type II membrane protein" evidence="3">
    <location>
        <begin position="7"/>
        <end position="29"/>
    </location>
</feature>
<feature type="topological domain" description="Lumenal" evidence="3">
    <location>
        <begin position="30"/>
        <end position="657"/>
    </location>
</feature>
<feature type="domain" description="Ricin B-type lectin" evidence="4">
    <location>
        <begin position="532"/>
        <end position="652"/>
    </location>
</feature>
<feature type="region of interest" description="Disordered" evidence="5">
    <location>
        <begin position="30"/>
        <end position="66"/>
    </location>
</feature>
<feature type="region of interest" description="Disordered" evidence="5">
    <location>
        <begin position="83"/>
        <end position="105"/>
    </location>
</feature>
<feature type="region of interest" description="Catalytic subdomain A">
    <location>
        <begin position="206"/>
        <end position="317"/>
    </location>
</feature>
<feature type="region of interest" description="Catalytic subdomain B">
    <location>
        <begin position="381"/>
        <end position="443"/>
    </location>
</feature>
<feature type="binding site" evidence="1">
    <location>
        <position position="247"/>
    </location>
    <ligand>
        <name>substrate</name>
    </ligand>
</feature>
<feature type="binding site" evidence="1">
    <location>
        <position position="277"/>
    </location>
    <ligand>
        <name>substrate</name>
    </ligand>
</feature>
<feature type="binding site" evidence="1">
    <location>
        <position position="301"/>
    </location>
    <ligand>
        <name>Mn(2+)</name>
        <dbReference type="ChEBI" id="CHEBI:29035"/>
    </ligand>
</feature>
<feature type="binding site" evidence="1">
    <location>
        <position position="303"/>
    </location>
    <ligand>
        <name>Mn(2+)</name>
        <dbReference type="ChEBI" id="CHEBI:29035"/>
    </ligand>
</feature>
<feature type="binding site" evidence="1">
    <location>
        <position position="412"/>
    </location>
    <ligand>
        <name>substrate</name>
    </ligand>
</feature>
<feature type="binding site" evidence="1">
    <location>
        <position position="440"/>
    </location>
    <ligand>
        <name>Mn(2+)</name>
        <dbReference type="ChEBI" id="CHEBI:29035"/>
    </ligand>
</feature>
<feature type="binding site" evidence="1">
    <location>
        <position position="443"/>
    </location>
    <ligand>
        <name>substrate</name>
    </ligand>
</feature>
<feature type="disulfide bond" evidence="4">
    <location>
        <begin position="197"/>
        <end position="435"/>
    </location>
</feature>
<feature type="disulfide bond" evidence="4">
    <location>
        <begin position="426"/>
        <end position="507"/>
    </location>
</feature>
<feature type="disulfide bond" evidence="4">
    <location>
        <begin position="545"/>
        <end position="562"/>
    </location>
</feature>
<feature type="disulfide bond" evidence="4">
    <location>
        <begin position="585"/>
        <end position="600"/>
    </location>
</feature>
<feature type="disulfide bond" evidence="4">
    <location>
        <begin position="625"/>
        <end position="640"/>
    </location>
</feature>
<feature type="splice variant" id="VSP_011204" description="In isoform 2 and isoform 3." evidence="7">
    <original>TICTVPIIDVISGNTYEIIPQGGGDEDGYARGAWDWSMLWKRVPLTSREKRLRKT</original>
    <variation>ATCTVPLIDYIDGNDYSIEPQQGGDEDGFARGAWDWSMLWKRIPLSHKEKAKRKH</variation>
    <location>
        <begin position="323"/>
        <end position="377"/>
    </location>
</feature>
<feature type="splice variant" id="VSP_011205" description="In isoform 3." evidence="7">
    <location>
        <begin position="384"/>
        <end position="657"/>
    </location>
</feature>
<feature type="sequence conflict" description="In Ref. 2; BAC28284." evidence="8" ref="2">
    <original>A</original>
    <variation>P</variation>
    <location>
        <position position="316"/>
    </location>
</feature>
<proteinExistence type="evidence at protein level"/>
<organism>
    <name type="scientific">Mus musculus</name>
    <name type="common">Mouse</name>
    <dbReference type="NCBI Taxonomy" id="10090"/>
    <lineage>
        <taxon>Eukaryota</taxon>
        <taxon>Metazoa</taxon>
        <taxon>Chordata</taxon>
        <taxon>Craniata</taxon>
        <taxon>Vertebrata</taxon>
        <taxon>Euteleostomi</taxon>
        <taxon>Mammalia</taxon>
        <taxon>Eutheria</taxon>
        <taxon>Euarchontoglires</taxon>
        <taxon>Glires</taxon>
        <taxon>Rodentia</taxon>
        <taxon>Myomorpha</taxon>
        <taxon>Muroidea</taxon>
        <taxon>Muridae</taxon>
        <taxon>Murinae</taxon>
        <taxon>Mus</taxon>
        <taxon>Mus</taxon>
    </lineage>
</organism>
<evidence type="ECO:0000250" key="1"/>
<evidence type="ECO:0000250" key="2">
    <source>
        <dbReference type="UniProtKB" id="Q86SF2"/>
    </source>
</evidence>
<evidence type="ECO:0000255" key="3"/>
<evidence type="ECO:0000255" key="4">
    <source>
        <dbReference type="PROSITE-ProRule" id="PRU00174"/>
    </source>
</evidence>
<evidence type="ECO:0000256" key="5">
    <source>
        <dbReference type="SAM" id="MobiDB-lite"/>
    </source>
</evidence>
<evidence type="ECO:0000269" key="6">
    <source>
    </source>
</evidence>
<evidence type="ECO:0000303" key="7">
    <source>
    </source>
</evidence>
<evidence type="ECO:0000305" key="8"/>
<protein>
    <recommendedName>
        <fullName>N-acetylgalactosaminyltransferase 7</fullName>
        <ecNumber evidence="2">2.4.1.41</ecNumber>
    </recommendedName>
    <alternativeName>
        <fullName>Polypeptide GalNAc transferase 7</fullName>
        <shortName>GalNAc-T7</shortName>
        <shortName>pp-GaNTase 7</shortName>
    </alternativeName>
    <alternativeName>
        <fullName>Protein-UDP acetylgalactosaminyltransferase 7</fullName>
    </alternativeName>
    <alternativeName>
        <fullName>UDP-GalNAc:polypeptide N-acetylgalactosaminyltransferase 7</fullName>
    </alternativeName>
</protein>
<accession>Q80VA0</accession>
<accession>Q8BY62</accession>
<accession>Q8BZ70</accession>
<accession>Q8BZW0</accession>
<accession>Q91VW6</accession>
<accession>Q99MD7</accession>
<gene>
    <name type="primary">Galnt7</name>
</gene>
<keyword id="KW-0025">Alternative splicing</keyword>
<keyword id="KW-1015">Disulfide bond</keyword>
<keyword id="KW-0328">Glycosyltransferase</keyword>
<keyword id="KW-0333">Golgi apparatus</keyword>
<keyword id="KW-0430">Lectin</keyword>
<keyword id="KW-0464">Manganese</keyword>
<keyword id="KW-0472">Membrane</keyword>
<keyword id="KW-0479">Metal-binding</keyword>
<keyword id="KW-1185">Reference proteome</keyword>
<keyword id="KW-0735">Signal-anchor</keyword>
<keyword id="KW-0808">Transferase</keyword>
<keyword id="KW-0812">Transmembrane</keyword>
<keyword id="KW-1133">Transmembrane helix</keyword>
<sequence>MRLKIGFILRSLLVVGSFLGLVVLWSSLSSRPDDQSPLSRMREDRDVNNPLPNRGGNGLAPGDDRFKPVVPWPHVEGVEVDLESIRRKNKAKNEQERHAGGDSQRDVMQRQYLTFKPQTFTYRDPVLRPGVLGNFEPKEPEPHGVVGGPGEKAKPLVLGPEYKQAVQASIKEFGFNMVASDMISLDRSVNDLRQEECKYWHYDENLLTSSVVIVFHNEGWSTLMRTVHSVIKRTPRKYLAEIVLIDDFSNKEHLKEKLDEYIKLWNGLVKVFRNERREGLIQARSIGAQKAKLGQVLIYLDAHCEVAVNWYAPLVAPISKDRTICTVPIIDVISGNTYEIIPQGGGDEDGYARGAWDWSMLWKRVPLTSREKRLRKTKTEPYRSPAMAGGLFAIEKDFFFELGLYDPGLQIWGGENFEISYKIWQCGGKLLFVPCSRVGHIYRLEGWQGNPPPLYVGSSPTLKNYVRVVEVWWDEYKDYFYASRPESKALPYGDISELKKFREDHNCKSFKWFMEEIAYDITAHYPLPPRNVEWGEIRGLETAYCIDSMGKTNGGFVELGPCHRMGGNQLFRINEANQLMQYDQCLTKGPDGSKVMITHCNLNEFKEWQYFKSLHRFTHITSGKCLDRSEVLHQVFISTCDSSKMTQKWEMNNIHSV</sequence>
<dbReference type="EC" id="2.4.1.41" evidence="2"/>
<dbReference type="EMBL" id="AF349573">
    <property type="protein sequence ID" value="AAK37549.1"/>
    <property type="molecule type" value="mRNA"/>
</dbReference>
<dbReference type="EMBL" id="AK033427">
    <property type="protein sequence ID" value="BAC28284.1"/>
    <property type="molecule type" value="mRNA"/>
</dbReference>
<dbReference type="EMBL" id="AK036523">
    <property type="protein sequence ID" value="BAC29461.1"/>
    <property type="molecule type" value="mRNA"/>
</dbReference>
<dbReference type="EMBL" id="AK041791">
    <property type="protein sequence ID" value="BAC31068.1"/>
    <property type="molecule type" value="mRNA"/>
</dbReference>
<dbReference type="EMBL" id="BC007484">
    <property type="protein sequence ID" value="AAH07484.1"/>
    <property type="status" value="ALT_INIT"/>
    <property type="molecule type" value="mRNA"/>
</dbReference>
<dbReference type="EMBL" id="BC049907">
    <property type="protein sequence ID" value="AAH49907.1"/>
    <property type="molecule type" value="mRNA"/>
</dbReference>
<dbReference type="EMBL" id="BC052461">
    <property type="protein sequence ID" value="AAH52461.1"/>
    <property type="molecule type" value="mRNA"/>
</dbReference>
<dbReference type="CCDS" id="CCDS22317.1">
    <molecule id="Q80VA0-1"/>
</dbReference>
<dbReference type="CCDS" id="CCDS52552.1">
    <molecule id="Q80VA0-2"/>
</dbReference>
<dbReference type="RefSeq" id="NP_001161453.1">
    <molecule id="Q80VA0-2"/>
    <property type="nucleotide sequence ID" value="NM_001167981.1"/>
</dbReference>
<dbReference type="RefSeq" id="NP_653332.3">
    <molecule id="Q80VA0-1"/>
    <property type="nucleotide sequence ID" value="NM_144731.4"/>
</dbReference>
<dbReference type="SMR" id="Q80VA0"/>
<dbReference type="BioGRID" id="223866">
    <property type="interactions" value="2"/>
</dbReference>
<dbReference type="FunCoup" id="Q80VA0">
    <property type="interactions" value="1758"/>
</dbReference>
<dbReference type="IntAct" id="Q80VA0">
    <property type="interactions" value="1"/>
</dbReference>
<dbReference type="STRING" id="10090.ENSMUSP00000034021"/>
<dbReference type="CAZy" id="CBM13">
    <property type="family name" value="Carbohydrate-Binding Module Family 13"/>
</dbReference>
<dbReference type="CAZy" id="GT27">
    <property type="family name" value="Glycosyltransferase Family 27"/>
</dbReference>
<dbReference type="iPTMnet" id="Q80VA0"/>
<dbReference type="PhosphoSitePlus" id="Q80VA0"/>
<dbReference type="PaxDb" id="10090-ENSMUSP00000034021"/>
<dbReference type="PeptideAtlas" id="Q80VA0"/>
<dbReference type="ProteomicsDB" id="267555">
    <molecule id="Q80VA0-1"/>
</dbReference>
<dbReference type="ProteomicsDB" id="267556">
    <molecule id="Q80VA0-2"/>
</dbReference>
<dbReference type="ProteomicsDB" id="267557">
    <molecule id="Q80VA0-3"/>
</dbReference>
<dbReference type="Pumba" id="Q80VA0"/>
<dbReference type="Antibodypedia" id="28517">
    <property type="antibodies" value="100 antibodies from 24 providers"/>
</dbReference>
<dbReference type="DNASU" id="108150"/>
<dbReference type="Ensembl" id="ENSMUST00000034021.12">
    <molecule id="Q80VA0-1"/>
    <property type="protein sequence ID" value="ENSMUSP00000034021.5"/>
    <property type="gene ID" value="ENSMUSG00000031608.14"/>
</dbReference>
<dbReference type="Ensembl" id="ENSMUST00000110316.3">
    <molecule id="Q80VA0-2"/>
    <property type="protein sequence ID" value="ENSMUSP00000105945.3"/>
    <property type="gene ID" value="ENSMUSG00000031608.14"/>
</dbReference>
<dbReference type="GeneID" id="108150"/>
<dbReference type="KEGG" id="mmu:108150"/>
<dbReference type="UCSC" id="uc009lsy.2">
    <molecule id="Q80VA0-1"/>
    <property type="organism name" value="mouse"/>
</dbReference>
<dbReference type="UCSC" id="uc009lsz.2">
    <molecule id="Q80VA0-2"/>
    <property type="organism name" value="mouse"/>
</dbReference>
<dbReference type="UCSC" id="uc009lta.2">
    <molecule id="Q80VA0-3"/>
    <property type="organism name" value="mouse"/>
</dbReference>
<dbReference type="AGR" id="MGI:1349449"/>
<dbReference type="CTD" id="51809"/>
<dbReference type="MGI" id="MGI:1349449">
    <property type="gene designation" value="Galnt7"/>
</dbReference>
<dbReference type="VEuPathDB" id="HostDB:ENSMUSG00000031608"/>
<dbReference type="eggNOG" id="KOG3737">
    <property type="taxonomic scope" value="Eukaryota"/>
</dbReference>
<dbReference type="GeneTree" id="ENSGT00940000158105"/>
<dbReference type="HOGENOM" id="CLU_013477_0_1_1"/>
<dbReference type="InParanoid" id="Q80VA0"/>
<dbReference type="OMA" id="YRNPERM"/>
<dbReference type="OrthoDB" id="6072411at2759"/>
<dbReference type="PhylomeDB" id="Q80VA0"/>
<dbReference type="TreeFam" id="TF352176"/>
<dbReference type="Reactome" id="R-MMU-913709">
    <property type="pathway name" value="O-linked glycosylation of mucins"/>
</dbReference>
<dbReference type="UniPathway" id="UPA00378"/>
<dbReference type="BioGRID-ORCS" id="108150">
    <property type="hits" value="3 hits in 80 CRISPR screens"/>
</dbReference>
<dbReference type="ChiTaRS" id="Galnt7">
    <property type="organism name" value="mouse"/>
</dbReference>
<dbReference type="PRO" id="PR:Q80VA0"/>
<dbReference type="Proteomes" id="UP000000589">
    <property type="component" value="Chromosome 8"/>
</dbReference>
<dbReference type="RNAct" id="Q80VA0">
    <property type="molecule type" value="protein"/>
</dbReference>
<dbReference type="Bgee" id="ENSMUSG00000031608">
    <property type="expression patterns" value="Expressed in epithelium of stomach and 253 other cell types or tissues"/>
</dbReference>
<dbReference type="GO" id="GO:0000139">
    <property type="term" value="C:Golgi membrane"/>
    <property type="evidence" value="ECO:0007669"/>
    <property type="project" value="UniProtKB-SubCell"/>
</dbReference>
<dbReference type="GO" id="GO:0030246">
    <property type="term" value="F:carbohydrate binding"/>
    <property type="evidence" value="ECO:0007669"/>
    <property type="project" value="UniProtKB-KW"/>
</dbReference>
<dbReference type="GO" id="GO:0046872">
    <property type="term" value="F:metal ion binding"/>
    <property type="evidence" value="ECO:0007669"/>
    <property type="project" value="UniProtKB-KW"/>
</dbReference>
<dbReference type="GO" id="GO:0004653">
    <property type="term" value="F:polypeptide N-acetylgalactosaminyltransferase activity"/>
    <property type="evidence" value="ECO:0000314"/>
    <property type="project" value="MGI"/>
</dbReference>
<dbReference type="GO" id="GO:0006493">
    <property type="term" value="P:protein O-linked glycosylation"/>
    <property type="evidence" value="ECO:0000314"/>
    <property type="project" value="MGI"/>
</dbReference>
<dbReference type="CDD" id="cd23437">
    <property type="entry name" value="beta-trefoil_Ricin_GALNT7"/>
    <property type="match status" value="1"/>
</dbReference>
<dbReference type="CDD" id="cd02510">
    <property type="entry name" value="pp-GalNAc-T"/>
    <property type="match status" value="1"/>
</dbReference>
<dbReference type="FunFam" id="2.80.10.50:FF:000019">
    <property type="entry name" value="Polypeptide N-acetylgalactosaminyltransferase"/>
    <property type="match status" value="1"/>
</dbReference>
<dbReference type="FunFam" id="3.90.550.10:FF:000031">
    <property type="entry name" value="Polypeptide N-acetylgalactosaminyltransferase"/>
    <property type="match status" value="1"/>
</dbReference>
<dbReference type="Gene3D" id="2.80.10.50">
    <property type="match status" value="1"/>
</dbReference>
<dbReference type="Gene3D" id="3.90.550.10">
    <property type="entry name" value="Spore Coat Polysaccharide Biosynthesis Protein SpsA, Chain A"/>
    <property type="match status" value="1"/>
</dbReference>
<dbReference type="InterPro" id="IPR045885">
    <property type="entry name" value="GalNAc-T"/>
</dbReference>
<dbReference type="InterPro" id="IPR001173">
    <property type="entry name" value="Glyco_trans_2-like"/>
</dbReference>
<dbReference type="InterPro" id="IPR029044">
    <property type="entry name" value="Nucleotide-diphossugar_trans"/>
</dbReference>
<dbReference type="InterPro" id="IPR035992">
    <property type="entry name" value="Ricin_B-like_lectins"/>
</dbReference>
<dbReference type="InterPro" id="IPR000772">
    <property type="entry name" value="Ricin_B_lectin"/>
</dbReference>
<dbReference type="PANTHER" id="PTHR11675">
    <property type="entry name" value="N-ACETYLGALACTOSAMINYLTRANSFERASE"/>
    <property type="match status" value="1"/>
</dbReference>
<dbReference type="PANTHER" id="PTHR11675:SF68">
    <property type="entry name" value="N-ACETYLGALACTOSAMINYLTRANSFERASE 7"/>
    <property type="match status" value="1"/>
</dbReference>
<dbReference type="Pfam" id="PF00535">
    <property type="entry name" value="Glycos_transf_2"/>
    <property type="match status" value="1"/>
</dbReference>
<dbReference type="Pfam" id="PF00652">
    <property type="entry name" value="Ricin_B_lectin"/>
    <property type="match status" value="1"/>
</dbReference>
<dbReference type="SMART" id="SM00458">
    <property type="entry name" value="RICIN"/>
    <property type="match status" value="1"/>
</dbReference>
<dbReference type="SUPFAM" id="SSF53448">
    <property type="entry name" value="Nucleotide-diphospho-sugar transferases"/>
    <property type="match status" value="1"/>
</dbReference>
<dbReference type="SUPFAM" id="SSF50370">
    <property type="entry name" value="Ricin B-like lectins"/>
    <property type="match status" value="1"/>
</dbReference>
<dbReference type="PROSITE" id="PS50231">
    <property type="entry name" value="RICIN_B_LECTIN"/>
    <property type="match status" value="1"/>
</dbReference>
<comment type="function">
    <text evidence="2">Glycopeptide transferase involved in O-linked oligosaccharide biosynthesis, which catalyzes the transfer of an N-acetyl-D-galactosamine residue to an already glycosylated peptide. In contrast to other proteins of the family, it does not act as a peptide transferase that transfers GalNAc onto serine or threonine residue on the protein receptor, but instead requires the prior addition of a GalNAc on a peptide before adding additional GalNAc moieties. Some peptide transferase activity is however not excluded, considering that its appropriate peptide substrate may remain unidentified (By similarity).</text>
</comment>
<comment type="catalytic activity">
    <reaction evidence="2">
        <text>L-seryl-[protein] + UDP-N-acetyl-alpha-D-galactosamine = a 3-O-[N-acetyl-alpha-D-galactosaminyl]-L-seryl-[protein] + UDP + H(+)</text>
        <dbReference type="Rhea" id="RHEA:23956"/>
        <dbReference type="Rhea" id="RHEA-COMP:9863"/>
        <dbReference type="Rhea" id="RHEA-COMP:12788"/>
        <dbReference type="ChEBI" id="CHEBI:15378"/>
        <dbReference type="ChEBI" id="CHEBI:29999"/>
        <dbReference type="ChEBI" id="CHEBI:53604"/>
        <dbReference type="ChEBI" id="CHEBI:58223"/>
        <dbReference type="ChEBI" id="CHEBI:67138"/>
        <dbReference type="EC" id="2.4.1.41"/>
    </reaction>
</comment>
<comment type="catalytic activity">
    <reaction evidence="2">
        <text>L-threonyl-[protein] + UDP-N-acetyl-alpha-D-galactosamine = a 3-O-[N-acetyl-alpha-D-galactosaminyl]-L-threonyl-[protein] + UDP + H(+)</text>
        <dbReference type="Rhea" id="RHEA:52424"/>
        <dbReference type="Rhea" id="RHEA-COMP:11060"/>
        <dbReference type="Rhea" id="RHEA-COMP:11689"/>
        <dbReference type="ChEBI" id="CHEBI:15378"/>
        <dbReference type="ChEBI" id="CHEBI:30013"/>
        <dbReference type="ChEBI" id="CHEBI:58223"/>
        <dbReference type="ChEBI" id="CHEBI:67138"/>
        <dbReference type="ChEBI" id="CHEBI:87075"/>
        <dbReference type="EC" id="2.4.1.41"/>
    </reaction>
</comment>
<comment type="cofactor">
    <cofactor evidence="1">
        <name>Mn(2+)</name>
        <dbReference type="ChEBI" id="CHEBI:29035"/>
    </cofactor>
</comment>
<comment type="pathway">
    <text evidence="2">Protein modification; protein glycosylation.</text>
</comment>
<comment type="subcellular location">
    <subcellularLocation>
        <location evidence="1">Golgi apparatus membrane</location>
        <topology evidence="1">Single-pass type II membrane protein</topology>
    </subcellularLocation>
</comment>
<comment type="alternative products">
    <event type="alternative splicing"/>
    <isoform>
        <id>Q80VA0-1</id>
        <name>1</name>
        <sequence type="displayed"/>
    </isoform>
    <isoform>
        <id>Q80VA0-2</id>
        <name>2</name>
        <sequence type="described" ref="VSP_011204"/>
    </isoform>
    <isoform>
        <id>Q80VA0-3</id>
        <name>3</name>
        <sequence type="described" ref="VSP_011204 VSP_011205"/>
    </isoform>
</comment>
<comment type="tissue specificity">
    <text evidence="6">Highly expressed in sublingual gland. Expressed at lower level in stomach, small intestiine and colon.</text>
</comment>
<comment type="domain">
    <text evidence="1">There are two conserved domains in the glycosyltransferase region: the N-terminal domain (domain A, also called GT1 motif), which is probably involved in manganese coordination and substrate binding and the C-terminal domain (domain B, also called Gal/GalNAc-T motif), which is probably involved in catalytic reaction and UDP-Gal binding.</text>
</comment>
<comment type="domain">
    <text evidence="1">The ricin B-type lectin domain binds to GalNAc and contributes to the glycopeptide specificity.</text>
</comment>
<comment type="similarity">
    <text evidence="8">Belongs to the glycosyltransferase 2 family. GalNAc-T subfamily.</text>
</comment>
<comment type="sequence caution" evidence="8">
    <conflict type="erroneous initiation">
        <sequence resource="EMBL-CDS" id="AAH07484"/>
    </conflict>
</comment>
<comment type="online information" name="Functional Glycomics Gateway - GTase">
    <link uri="http://www.functionalglycomics.org/glycomics/molecule/jsp/glycoEnzyme/viewGlycoEnzyme.jsp?gbpId=gt_mou_516"/>
    <text>N-acetylgalactosaminyltransferase 7</text>
</comment>